<dbReference type="EC" id="2.8.1.-" evidence="1"/>
<dbReference type="EMBL" id="CP001396">
    <property type="protein sequence ID" value="ACR64180.1"/>
    <property type="molecule type" value="Genomic_DNA"/>
</dbReference>
<dbReference type="RefSeq" id="WP_001157406.1">
    <property type="nucleotide sequence ID" value="NC_012759.1"/>
</dbReference>
<dbReference type="SMR" id="C4ZV92"/>
<dbReference type="KEGG" id="ebw:BWG_1178"/>
<dbReference type="HOGENOM" id="CLU_026481_0_0_6"/>
<dbReference type="GO" id="GO:0005737">
    <property type="term" value="C:cytoplasm"/>
    <property type="evidence" value="ECO:0007669"/>
    <property type="project" value="UniProtKB-SubCell"/>
</dbReference>
<dbReference type="GO" id="GO:0051539">
    <property type="term" value="F:4 iron, 4 sulfur cluster binding"/>
    <property type="evidence" value="ECO:0007669"/>
    <property type="project" value="UniProtKB-UniRule"/>
</dbReference>
<dbReference type="GO" id="GO:0005524">
    <property type="term" value="F:ATP binding"/>
    <property type="evidence" value="ECO:0007669"/>
    <property type="project" value="UniProtKB-UniRule"/>
</dbReference>
<dbReference type="GO" id="GO:0000287">
    <property type="term" value="F:magnesium ion binding"/>
    <property type="evidence" value="ECO:0007669"/>
    <property type="project" value="UniProtKB-UniRule"/>
</dbReference>
<dbReference type="GO" id="GO:0016783">
    <property type="term" value="F:sulfurtransferase activity"/>
    <property type="evidence" value="ECO:0007669"/>
    <property type="project" value="UniProtKB-UniRule"/>
</dbReference>
<dbReference type="GO" id="GO:0000049">
    <property type="term" value="F:tRNA binding"/>
    <property type="evidence" value="ECO:0007669"/>
    <property type="project" value="UniProtKB-KW"/>
</dbReference>
<dbReference type="GO" id="GO:0034227">
    <property type="term" value="P:tRNA thio-modification"/>
    <property type="evidence" value="ECO:0007669"/>
    <property type="project" value="UniProtKB-UniRule"/>
</dbReference>
<dbReference type="CDD" id="cd24138">
    <property type="entry name" value="TtcA-like"/>
    <property type="match status" value="1"/>
</dbReference>
<dbReference type="FunFam" id="3.40.50.620:FF:000046">
    <property type="entry name" value="tRNA-cytidine(32) 2-sulfurtransferase"/>
    <property type="match status" value="1"/>
</dbReference>
<dbReference type="Gene3D" id="3.40.50.620">
    <property type="entry name" value="HUPs"/>
    <property type="match status" value="1"/>
</dbReference>
<dbReference type="HAMAP" id="MF_01850">
    <property type="entry name" value="TtcA"/>
    <property type="match status" value="1"/>
</dbReference>
<dbReference type="InterPro" id="IPR014729">
    <property type="entry name" value="Rossmann-like_a/b/a_fold"/>
</dbReference>
<dbReference type="InterPro" id="IPR011063">
    <property type="entry name" value="TilS/TtcA_N"/>
</dbReference>
<dbReference type="InterPro" id="IPR012089">
    <property type="entry name" value="tRNA_Cyd_32_2_STrfase"/>
</dbReference>
<dbReference type="InterPro" id="IPR035107">
    <property type="entry name" value="tRNA_thiolation_TtcA_Ctu1"/>
</dbReference>
<dbReference type="NCBIfam" id="NF007972">
    <property type="entry name" value="PRK10696.1"/>
    <property type="match status" value="1"/>
</dbReference>
<dbReference type="PANTHER" id="PTHR43686:SF1">
    <property type="entry name" value="AMINOTRAN_5 DOMAIN-CONTAINING PROTEIN"/>
    <property type="match status" value="1"/>
</dbReference>
<dbReference type="PANTHER" id="PTHR43686">
    <property type="entry name" value="SULFURTRANSFERASE-RELATED"/>
    <property type="match status" value="1"/>
</dbReference>
<dbReference type="Pfam" id="PF01171">
    <property type="entry name" value="ATP_bind_3"/>
    <property type="match status" value="1"/>
</dbReference>
<dbReference type="PIRSF" id="PIRSF004976">
    <property type="entry name" value="ATPase_YdaO"/>
    <property type="match status" value="1"/>
</dbReference>
<dbReference type="SUPFAM" id="SSF52402">
    <property type="entry name" value="Adenine nucleotide alpha hydrolases-like"/>
    <property type="match status" value="1"/>
</dbReference>
<reference key="1">
    <citation type="journal article" date="2009" name="J. Bacteriol.">
        <title>Genomic sequencing reveals regulatory mutations and recombinational events in the widely used MC4100 lineage of Escherichia coli K-12.</title>
        <authorList>
            <person name="Ferenci T."/>
            <person name="Zhou Z."/>
            <person name="Betteridge T."/>
            <person name="Ren Y."/>
            <person name="Liu Y."/>
            <person name="Feng L."/>
            <person name="Reeves P.R."/>
            <person name="Wang L."/>
        </authorList>
    </citation>
    <scope>NUCLEOTIDE SEQUENCE [LARGE SCALE GENOMIC DNA]</scope>
    <source>
        <strain>K12 / MC4100 / BW2952</strain>
    </source>
</reference>
<organism>
    <name type="scientific">Escherichia coli (strain K12 / MC4100 / BW2952)</name>
    <dbReference type="NCBI Taxonomy" id="595496"/>
    <lineage>
        <taxon>Bacteria</taxon>
        <taxon>Pseudomonadati</taxon>
        <taxon>Pseudomonadota</taxon>
        <taxon>Gammaproteobacteria</taxon>
        <taxon>Enterobacterales</taxon>
        <taxon>Enterobacteriaceae</taxon>
        <taxon>Escherichia</taxon>
    </lineage>
</organism>
<accession>C4ZV92</accession>
<keyword id="KW-0004">4Fe-4S</keyword>
<keyword id="KW-0067">ATP-binding</keyword>
<keyword id="KW-0963">Cytoplasm</keyword>
<keyword id="KW-0408">Iron</keyword>
<keyword id="KW-0411">Iron-sulfur</keyword>
<keyword id="KW-0460">Magnesium</keyword>
<keyword id="KW-0479">Metal-binding</keyword>
<keyword id="KW-0547">Nucleotide-binding</keyword>
<keyword id="KW-0694">RNA-binding</keyword>
<keyword id="KW-0808">Transferase</keyword>
<keyword id="KW-0819">tRNA processing</keyword>
<keyword id="KW-0820">tRNA-binding</keyword>
<proteinExistence type="inferred from homology"/>
<comment type="function">
    <text evidence="1">Catalyzes the ATP-dependent 2-thiolation of cytidine in position 32 of tRNA, to form 2-thiocytidine (s(2)C32). The sulfur atoms are provided by the cysteine/cysteine desulfurase (IscS) system.</text>
</comment>
<comment type="catalytic activity">
    <reaction evidence="1">
        <text>cytidine(32) in tRNA + S-sulfanyl-L-cysteinyl-[cysteine desulfurase] + AH2 + ATP = 2-thiocytidine(32) in tRNA + L-cysteinyl-[cysteine desulfurase] + A + AMP + diphosphate + H(+)</text>
        <dbReference type="Rhea" id="RHEA:57048"/>
        <dbReference type="Rhea" id="RHEA-COMP:10288"/>
        <dbReference type="Rhea" id="RHEA-COMP:12157"/>
        <dbReference type="Rhea" id="RHEA-COMP:12158"/>
        <dbReference type="Rhea" id="RHEA-COMP:14821"/>
        <dbReference type="ChEBI" id="CHEBI:13193"/>
        <dbReference type="ChEBI" id="CHEBI:15378"/>
        <dbReference type="ChEBI" id="CHEBI:17499"/>
        <dbReference type="ChEBI" id="CHEBI:29950"/>
        <dbReference type="ChEBI" id="CHEBI:30616"/>
        <dbReference type="ChEBI" id="CHEBI:33019"/>
        <dbReference type="ChEBI" id="CHEBI:61963"/>
        <dbReference type="ChEBI" id="CHEBI:82748"/>
        <dbReference type="ChEBI" id="CHEBI:141453"/>
        <dbReference type="ChEBI" id="CHEBI:456215"/>
    </reaction>
    <physiologicalReaction direction="left-to-right" evidence="1">
        <dbReference type="Rhea" id="RHEA:57049"/>
    </physiologicalReaction>
</comment>
<comment type="cofactor">
    <cofactor evidence="1">
        <name>Mg(2+)</name>
        <dbReference type="ChEBI" id="CHEBI:18420"/>
    </cofactor>
</comment>
<comment type="cofactor">
    <cofactor evidence="1">
        <name>[4Fe-4S] cluster</name>
        <dbReference type="ChEBI" id="CHEBI:49883"/>
    </cofactor>
    <text evidence="1">Binds 1 [4Fe-4S] cluster per subunit. The cluster is chelated by three Cys residues, the fourth Fe has a free coordination site that may bind a sulfur atom transferred from the persulfide of IscS.</text>
</comment>
<comment type="pathway">
    <text evidence="1">tRNA modification.</text>
</comment>
<comment type="subunit">
    <text evidence="1">Homodimer.</text>
</comment>
<comment type="subcellular location">
    <subcellularLocation>
        <location evidence="1">Cytoplasm</location>
    </subcellularLocation>
</comment>
<comment type="miscellaneous">
    <text evidence="1">The thiolation reaction likely consists of two steps: a first activation step by ATP to form an adenylated intermediate of the target base of tRNA, and a second nucleophilic substitution step of the sulfur (S) atom supplied by the hydrosulfide attached to the Fe-S cluster.</text>
</comment>
<comment type="similarity">
    <text evidence="1">Belongs to the TtcA family.</text>
</comment>
<protein>
    <recommendedName>
        <fullName evidence="1">tRNA-cytidine(32) 2-sulfurtransferase</fullName>
        <ecNumber evidence="1">2.8.1.-</ecNumber>
    </recommendedName>
    <alternativeName>
        <fullName evidence="1">Two-thiocytidine biosynthesis protein A</fullName>
    </alternativeName>
    <alternativeName>
        <fullName evidence="1">tRNA 2-thiocytidine biosynthesis protein TtcA</fullName>
    </alternativeName>
</protein>
<name>TTCA_ECOBW</name>
<feature type="chain" id="PRO_1000216130" description="tRNA-cytidine(32) 2-sulfurtransferase">
    <location>
        <begin position="1"/>
        <end position="311"/>
    </location>
</feature>
<feature type="short sequence motif" description="PP-loop motif" evidence="1">
    <location>
        <begin position="47"/>
        <end position="52"/>
    </location>
</feature>
<feature type="binding site" evidence="1">
    <location>
        <position position="122"/>
    </location>
    <ligand>
        <name>[4Fe-4S] cluster</name>
        <dbReference type="ChEBI" id="CHEBI:49883"/>
    </ligand>
</feature>
<feature type="binding site" evidence="1">
    <location>
        <position position="125"/>
    </location>
    <ligand>
        <name>[4Fe-4S] cluster</name>
        <dbReference type="ChEBI" id="CHEBI:49883"/>
    </ligand>
</feature>
<feature type="binding site" evidence="1">
    <location>
        <position position="213"/>
    </location>
    <ligand>
        <name>[4Fe-4S] cluster</name>
        <dbReference type="ChEBI" id="CHEBI:49883"/>
    </ligand>
</feature>
<gene>
    <name evidence="1" type="primary">ttcA</name>
    <name type="ordered locus">BWG_1178</name>
</gene>
<sequence length="311" mass="35561">MQENQQITKKEQYNLNKLQKRLRRNVGEAIADFNMIEEGDRIMVCLSGGKDSYTMLEILRNLQQSAPINFSLVAVNLDQKQPGFPEHVLPEYLEKLGVEYKIVEENTYGIVKEKIPEGKTTCSLCSRLRRGILYRTATELGATKIALGHHRDDILQTLFLNMFYGGKMKGMPPKLMSDDGKHIVIRPLAYCREKDIQRFADAKAFPIIPCNLCGSQPNLQRQVIADMLRDWDKRYPGRIETMFSAMQNVVPSHLCDTNLFDFKGITHGSEVVNGGDLAFDREEIPLQPACWQPEEDENQLDELRLNVVEVK</sequence>
<evidence type="ECO:0000255" key="1">
    <source>
        <dbReference type="HAMAP-Rule" id="MF_01850"/>
    </source>
</evidence>